<keyword id="KW-0025">Alternative splicing</keyword>
<keyword id="KW-1262">Eukaryotic host gene expression shutoff by virus</keyword>
<keyword id="KW-1035">Host cytoplasm</keyword>
<keyword id="KW-1190">Host gene expression shutoff by virus</keyword>
<keyword id="KW-1192">Host mRNA suppression by virus</keyword>
<keyword id="KW-1048">Host nucleus</keyword>
<keyword id="KW-0945">Host-virus interaction</keyword>
<keyword id="KW-1090">Inhibition of host innate immune response by virus</keyword>
<keyword id="KW-1114">Inhibition of host interferon signaling pathway by virus</keyword>
<keyword id="KW-1102">Inhibition of host PKR by virus</keyword>
<keyword id="KW-1103">Inhibition of host pre-mRNA processing by virus</keyword>
<keyword id="KW-1088">Inhibition of host RIG-I by virus</keyword>
<keyword id="KW-1113">Inhibition of host RLR pathway by virus</keyword>
<keyword id="KW-0922">Interferon antiviral system evasion</keyword>
<keyword id="KW-0694">RNA-binding</keyword>
<keyword id="KW-0832">Ubl conjugation</keyword>
<keyword id="KW-0899">Viral immunoevasion</keyword>
<evidence type="ECO:0000255" key="1">
    <source>
        <dbReference type="HAMAP-Rule" id="MF_04066"/>
    </source>
</evidence>
<evidence type="ECO:0000256" key="2">
    <source>
        <dbReference type="SAM" id="MobiDB-lite"/>
    </source>
</evidence>
<organismHost>
    <name type="scientific">Aves</name>
    <dbReference type="NCBI Taxonomy" id="8782"/>
</organismHost>
<organismHost>
    <name type="scientific">Phocidae</name>
    <name type="common">true seals</name>
    <dbReference type="NCBI Taxonomy" id="9709"/>
</organismHost>
<organism>
    <name type="scientific">Influenza A virus (strain A/Seal/Massachusetts/133/1982 H4N5)</name>
    <dbReference type="NCBI Taxonomy" id="387250"/>
    <lineage>
        <taxon>Viruses</taxon>
        <taxon>Riboviria</taxon>
        <taxon>Orthornavirae</taxon>
        <taxon>Negarnaviricota</taxon>
        <taxon>Polyploviricotina</taxon>
        <taxon>Insthoviricetes</taxon>
        <taxon>Articulavirales</taxon>
        <taxon>Orthomyxoviridae</taxon>
        <taxon>Alphainfluenzavirus</taxon>
        <taxon>Alphainfluenzavirus influenzae</taxon>
        <taxon>Influenza A virus</taxon>
    </lineage>
</organism>
<sequence length="230" mass="26069">MDSNTVSSFQVDCFLWHVRKRFADQELGDAPFLDRLRRDQKSLRGRGSTLGLDIETATRAGKQIVERILEEESDEALKMTIASVPASRYLTDMTLEEMSRDWFMLMPKQKVAGSLCIRMDQAIMDKNIILKANFSVIFDRLETLILLRAFTEEGAIVGEISPLPSLPGHTDEDVKNAVGVLIGGLEWNDNTVRVSETLQRFAWRSSNEDGRPPLPPKQKRKMARTIESEV</sequence>
<comment type="function">
    <text evidence="1">Inhibits post-transcriptional processing of cellular pre-mRNA, by binding and inhibiting two cellular proteins that are required for the 3'-end processing of cellular pre-mRNAs: the 30 kDa cleavage and polyadenylation specificity factor/CPSF4 and the poly(A)-binding protein 2/PABPN1. In turn, unprocessed 3' end pre-mRNAs accumulate in the host nucleus and are no longer exported to the cytoplasm. Cellular protein synthesis is thereby shut off very early after virus infection. Viral protein synthesis is not affected by the inhibition of the cellular 3' end processing machinery because the poly(A) tails of viral mRNAs are produced by the viral polymerase through a stuttering mechanism. Prevents the establishment of the cellular antiviral state by inhibiting TRIM25-mediated RIGI ubiquitination, which normally triggers the antiviral transduction signal that leads to the activation of type I IFN genes by transcription factors IRF3 and IRF7. Also binds poly(A) and U6 snRNA. Inhibits the integrated stress response (ISR) in the infected cell by blocking dsRNA binding by EIF2AK2/PKR and further phosphorylation of EIF2S1/EIF-2ALPHA. Stress granule formation is thus inhibited, which allows protein synthesis and viral replication.</text>
</comment>
<comment type="subunit">
    <text evidence="1">Homodimer. Interacts with host TRIM25 (via coiled coil); this interaction specifically inhibits TRIM25 multimerization and TRIM25-mediated RIGI CARD ubiquitination. Interacts with human EIF2AK2/PKR, CPSF4, IVNS1ABP and PABPN1.</text>
</comment>
<comment type="subcellular location">
    <subcellularLocation>
        <location evidence="1">Host nucleus</location>
    </subcellularLocation>
    <subcellularLocation>
        <location evidence="1">Host cytoplasm</location>
    </subcellularLocation>
    <text evidence="1">In uninfected, transfected cells, NS1 is localized in the nucleus. Only in virus infected cells, the nuclear export signal is unveiled, presumably by a viral protein, and a fraction of NS1 is exported in the cytoplasm.</text>
</comment>
<comment type="alternative products">
    <event type="alternative splicing"/>
    <isoform>
        <id>Q9YPE8-1</id>
        <name>NS1</name>
        <sequence type="displayed"/>
    </isoform>
    <isoform>
        <id>P0C2M0-1</id>
        <name>NEP</name>
        <name>NS2</name>
        <sequence type="external"/>
    </isoform>
</comment>
<comment type="domain">
    <text evidence="1">The dsRNA-binding region is required for suppression of RNA silencing.</text>
</comment>
<comment type="PTM">
    <text evidence="1">Upon interferon induction, ISGylated via host HERC5; this results in the impairment of NS1 interaction with RNA targets due to its inability to form homodimers and to interact with host EIF2AK2/PKR.</text>
</comment>
<comment type="similarity">
    <text evidence="1">Belongs to the influenza A viruses NS1 family.</text>
</comment>
<proteinExistence type="inferred from homology"/>
<dbReference type="EMBL" id="M80947">
    <property type="protein sequence ID" value="AAC36134.1"/>
    <property type="molecule type" value="Genomic_RNA"/>
</dbReference>
<dbReference type="SMR" id="Q9YPE8"/>
<dbReference type="GO" id="GO:0030430">
    <property type="term" value="C:host cell cytoplasm"/>
    <property type="evidence" value="ECO:0007669"/>
    <property type="project" value="UniProtKB-SubCell"/>
</dbReference>
<dbReference type="GO" id="GO:0042025">
    <property type="term" value="C:host cell nucleus"/>
    <property type="evidence" value="ECO:0007669"/>
    <property type="project" value="UniProtKB-SubCell"/>
</dbReference>
<dbReference type="GO" id="GO:0030291">
    <property type="term" value="F:protein serine/threonine kinase inhibitor activity"/>
    <property type="evidence" value="ECO:0007669"/>
    <property type="project" value="UniProtKB-KW"/>
</dbReference>
<dbReference type="GO" id="GO:0003723">
    <property type="term" value="F:RNA binding"/>
    <property type="evidence" value="ECO:0007669"/>
    <property type="project" value="UniProtKB-KW"/>
</dbReference>
<dbReference type="GO" id="GO:0039540">
    <property type="term" value="P:symbiont-mediated suppression of host cytoplasmic pattern recognition receptor signaling pathway via inhibition of RIG-I activity"/>
    <property type="evidence" value="ECO:0007669"/>
    <property type="project" value="UniProtKB-KW"/>
</dbReference>
<dbReference type="GO" id="GO:0039657">
    <property type="term" value="P:symbiont-mediated suppression of host gene expression"/>
    <property type="evidence" value="ECO:0007669"/>
    <property type="project" value="UniProtKB-KW"/>
</dbReference>
<dbReference type="GO" id="GO:0039524">
    <property type="term" value="P:symbiont-mediated suppression of host mRNA processing"/>
    <property type="evidence" value="ECO:0007669"/>
    <property type="project" value="UniProtKB-KW"/>
</dbReference>
<dbReference type="GO" id="GO:0039580">
    <property type="term" value="P:symbiont-mediated suppression of host PKR/eIFalpha signaling"/>
    <property type="evidence" value="ECO:0007669"/>
    <property type="project" value="UniProtKB-KW"/>
</dbReference>
<dbReference type="GO" id="GO:0039502">
    <property type="term" value="P:symbiont-mediated suppression of host type I interferon-mediated signaling pathway"/>
    <property type="evidence" value="ECO:0007669"/>
    <property type="project" value="UniProtKB-KW"/>
</dbReference>
<dbReference type="FunFam" id="1.10.287.10:FF:000001">
    <property type="entry name" value="Non-structural protein 1"/>
    <property type="match status" value="1"/>
</dbReference>
<dbReference type="FunFam" id="3.30.420.330:FF:000001">
    <property type="entry name" value="Non-structural protein 1"/>
    <property type="match status" value="1"/>
</dbReference>
<dbReference type="Gene3D" id="3.30.420.330">
    <property type="entry name" value="Influenza virus non-structural protein, effector domain"/>
    <property type="match status" value="1"/>
</dbReference>
<dbReference type="Gene3D" id="1.10.287.10">
    <property type="entry name" value="S15/NS1, RNA-binding"/>
    <property type="match status" value="1"/>
</dbReference>
<dbReference type="HAMAP" id="MF_04066">
    <property type="entry name" value="INFV_NS1"/>
    <property type="match status" value="1"/>
</dbReference>
<dbReference type="InterPro" id="IPR004208">
    <property type="entry name" value="NS1"/>
</dbReference>
<dbReference type="InterPro" id="IPR000256">
    <property type="entry name" value="NS1A"/>
</dbReference>
<dbReference type="InterPro" id="IPR038064">
    <property type="entry name" value="NS1A_effect_dom-like_sf"/>
</dbReference>
<dbReference type="InterPro" id="IPR009068">
    <property type="entry name" value="uS15_NS1_RNA-bd_sf"/>
</dbReference>
<dbReference type="Pfam" id="PF00600">
    <property type="entry name" value="Flu_NS1"/>
    <property type="match status" value="1"/>
</dbReference>
<dbReference type="SUPFAM" id="SSF143021">
    <property type="entry name" value="Ns1 effector domain-like"/>
    <property type="match status" value="1"/>
</dbReference>
<dbReference type="SUPFAM" id="SSF47060">
    <property type="entry name" value="S15/NS1 RNA-binding domain"/>
    <property type="match status" value="1"/>
</dbReference>
<gene>
    <name evidence="1" type="primary">NS</name>
</gene>
<protein>
    <recommendedName>
        <fullName evidence="1">Non-structural protein 1</fullName>
        <shortName evidence="1">NS1</shortName>
    </recommendedName>
    <alternativeName>
        <fullName evidence="1">NS1A</fullName>
    </alternativeName>
</protein>
<name>NS1_I82A3</name>
<feature type="chain" id="PRO_0000281020" description="Non-structural protein 1">
    <location>
        <begin position="1"/>
        <end position="230"/>
    </location>
</feature>
<feature type="region of interest" description="RNA-binding and homodimerization" evidence="1">
    <location>
        <begin position="1"/>
        <end position="73"/>
    </location>
</feature>
<feature type="region of interest" description="CPSF4-binding" evidence="1">
    <location>
        <begin position="180"/>
        <end position="215"/>
    </location>
</feature>
<feature type="region of interest" description="Disordered" evidence="2">
    <location>
        <begin position="205"/>
        <end position="230"/>
    </location>
</feature>
<feature type="region of interest" description="PABPN1-binding" evidence="1">
    <location>
        <begin position="223"/>
        <end position="230"/>
    </location>
</feature>
<feature type="short sequence motif" description="Nuclear localization signal" evidence="1">
    <location>
        <begin position="34"/>
        <end position="38"/>
    </location>
</feature>
<feature type="short sequence motif" description="Nuclear export signal" evidence="1">
    <location>
        <begin position="137"/>
        <end position="146"/>
    </location>
</feature>
<accession>Q9YPE8</accession>
<reference key="1">
    <citation type="journal article" date="1998" name="Virus Res.">
        <title>Influence of host species on the evolution of the nonstructural (NS) gene of influenza A viruses.</title>
        <authorList>
            <person name="Kawaoka Y."/>
            <person name="Gorman O.T."/>
            <person name="Ito T."/>
            <person name="Wells K."/>
            <person name="Donis R.O."/>
            <person name="Castrucci M.R."/>
            <person name="Donatelli I."/>
            <person name="Webster R.G."/>
        </authorList>
    </citation>
    <scope>NUCLEOTIDE SEQUENCE [GENOMIC RNA]</scope>
</reference>